<feature type="chain" id="PRO_0000081250" description="Transcriptional regulatory protein SrrA">
    <location>
        <begin position="1"/>
        <end position="241"/>
    </location>
</feature>
<feature type="domain" description="Response regulatory" evidence="4">
    <location>
        <begin position="4"/>
        <end position="117"/>
    </location>
</feature>
<feature type="DNA-binding region" description="OmpR/PhoB-type" evidence="5">
    <location>
        <begin position="133"/>
        <end position="233"/>
    </location>
</feature>
<feature type="modified residue" description="4-aspartylphosphate" evidence="4">
    <location>
        <position position="53"/>
    </location>
</feature>
<keyword id="KW-0010">Activator</keyword>
<keyword id="KW-0963">Cytoplasm</keyword>
<keyword id="KW-0238">DNA-binding</keyword>
<keyword id="KW-0597">Phosphoprotein</keyword>
<keyword id="KW-0678">Repressor</keyword>
<keyword id="KW-0804">Transcription</keyword>
<keyword id="KW-0805">Transcription regulation</keyword>
<keyword id="KW-0902">Two-component regulatory system</keyword>
<reference key="1">
    <citation type="journal article" date="2001" name="Lancet">
        <title>Whole genome sequencing of meticillin-resistant Staphylococcus aureus.</title>
        <authorList>
            <person name="Kuroda M."/>
            <person name="Ohta T."/>
            <person name="Uchiyama I."/>
            <person name="Baba T."/>
            <person name="Yuzawa H."/>
            <person name="Kobayashi I."/>
            <person name="Cui L."/>
            <person name="Oguchi A."/>
            <person name="Aoki K."/>
            <person name="Nagai Y."/>
            <person name="Lian J.-Q."/>
            <person name="Ito T."/>
            <person name="Kanamori M."/>
            <person name="Matsumaru H."/>
            <person name="Maruyama A."/>
            <person name="Murakami H."/>
            <person name="Hosoyama A."/>
            <person name="Mizutani-Ui Y."/>
            <person name="Takahashi N.K."/>
            <person name="Sawano T."/>
            <person name="Inoue R."/>
            <person name="Kaito C."/>
            <person name="Sekimizu K."/>
            <person name="Hirakawa H."/>
            <person name="Kuhara S."/>
            <person name="Goto S."/>
            <person name="Yabuzaki J."/>
            <person name="Kanehisa M."/>
            <person name="Yamashita A."/>
            <person name="Oshima K."/>
            <person name="Furuya K."/>
            <person name="Yoshino C."/>
            <person name="Shiba T."/>
            <person name="Hattori M."/>
            <person name="Ogasawara N."/>
            <person name="Hayashi H."/>
            <person name="Hiramatsu K."/>
        </authorList>
    </citation>
    <scope>NUCLEOTIDE SEQUENCE [LARGE SCALE GENOMIC DNA]</scope>
    <source>
        <strain>N315</strain>
    </source>
</reference>
<reference key="2">
    <citation type="journal article" date="2005" name="J. Microbiol. Methods">
        <title>Correlation of proteomic and transcriptomic profiles of Staphylococcus aureus during the post-exponential phase of growth.</title>
        <authorList>
            <person name="Scherl A."/>
            <person name="Francois P."/>
            <person name="Bento M."/>
            <person name="Deshusses J.M."/>
            <person name="Charbonnier Y."/>
            <person name="Converset V."/>
            <person name="Huyghe A."/>
            <person name="Walter N."/>
            <person name="Hoogland C."/>
            <person name="Appel R.D."/>
            <person name="Sanchez J.-C."/>
            <person name="Zimmermann-Ivol C.G."/>
            <person name="Corthals G.L."/>
            <person name="Hochstrasser D.F."/>
            <person name="Schrenzel J."/>
        </authorList>
    </citation>
    <scope>IDENTIFICATION BY MASS SPECTROMETRY</scope>
    <source>
        <strain>N315</strain>
    </source>
</reference>
<reference key="3">
    <citation type="submission" date="2007-10" db="UniProtKB">
        <title>Shotgun proteomic analysis of total and membrane protein extracts of S. aureus strain N315.</title>
        <authorList>
            <person name="Vaezzadeh A.R."/>
            <person name="Deshusses J."/>
            <person name="Lescuyer P."/>
            <person name="Hochstrasser D.F."/>
        </authorList>
    </citation>
    <scope>IDENTIFICATION BY MASS SPECTROMETRY [LARGE SCALE ANALYSIS]</scope>
    <source>
        <strain>N315</strain>
    </source>
</reference>
<gene>
    <name type="primary">srrA</name>
    <name type="ordered locus">SA1323</name>
</gene>
<organism>
    <name type="scientific">Staphylococcus aureus (strain N315)</name>
    <dbReference type="NCBI Taxonomy" id="158879"/>
    <lineage>
        <taxon>Bacteria</taxon>
        <taxon>Bacillati</taxon>
        <taxon>Bacillota</taxon>
        <taxon>Bacilli</taxon>
        <taxon>Bacillales</taxon>
        <taxon>Staphylococcaceae</taxon>
        <taxon>Staphylococcus</taxon>
    </lineage>
</organism>
<comment type="function">
    <text evidence="2 3">Member of the two-component regulatory system SrrA/SrrB, which is involved in the global regulation of staphylococcal virulence factors in response to environmental oxygen levels as well as biofilm formation. Also plays an essential role in host-derived nitric oxide resistance by regulating hmp/flavohemoglobin, an enzyme that detoxifies nitric oxide by converting it to nitrate (By similarity). Functions as a transcription regulator by direct binding to promoter regions of target genes (By similarity).</text>
</comment>
<comment type="subcellular location">
    <subcellularLocation>
        <location evidence="1">Cytoplasm</location>
    </subcellularLocation>
</comment>
<comment type="PTM">
    <text evidence="1">Phosphorylated by SrrB.</text>
</comment>
<protein>
    <recommendedName>
        <fullName>Transcriptional regulatory protein SrrA</fullName>
    </recommendedName>
    <alternativeName>
        <fullName>Staphylococcal respiratory response protein A</fullName>
    </alternativeName>
</protein>
<sequence length="241" mass="28161">MSNEILIVDDEDRIRRLLKMYLERESFEIHEASNGQEAYELAMENNYACILLDLMLPEMDGIQVATKLREHKQTPIIMLTAKGEETNRVEGFESGADDYIVKPFSPREVVLRVKALLRRTQSTTVEQSEPHARDVIEFKHLEIDNDAHRVLADNQEVNLTPKEYELLIYLAKTPNKVFDREQLLKEVWHYEFYGDLRTVDTHVKRLREKLNRVSSEAAHMIQTVWGVGYKFEVKSNDEPAK</sequence>
<dbReference type="EMBL" id="BA000018">
    <property type="protein sequence ID" value="BAB42585.1"/>
    <property type="molecule type" value="Genomic_DNA"/>
</dbReference>
<dbReference type="RefSeq" id="WP_000064078.1">
    <property type="nucleotide sequence ID" value="NC_002745.2"/>
</dbReference>
<dbReference type="SMR" id="Q7A5H6"/>
<dbReference type="EnsemblBacteria" id="BAB42585">
    <property type="protein sequence ID" value="BAB42585"/>
    <property type="gene ID" value="BAB42585"/>
</dbReference>
<dbReference type="GeneID" id="98345856"/>
<dbReference type="KEGG" id="sau:SA1323"/>
<dbReference type="HOGENOM" id="CLU_000445_30_4_9"/>
<dbReference type="GO" id="GO:0005829">
    <property type="term" value="C:cytosol"/>
    <property type="evidence" value="ECO:0007669"/>
    <property type="project" value="TreeGrafter"/>
</dbReference>
<dbReference type="GO" id="GO:0032993">
    <property type="term" value="C:protein-DNA complex"/>
    <property type="evidence" value="ECO:0007669"/>
    <property type="project" value="TreeGrafter"/>
</dbReference>
<dbReference type="GO" id="GO:0000156">
    <property type="term" value="F:phosphorelay response regulator activity"/>
    <property type="evidence" value="ECO:0007669"/>
    <property type="project" value="TreeGrafter"/>
</dbReference>
<dbReference type="GO" id="GO:0000976">
    <property type="term" value="F:transcription cis-regulatory region binding"/>
    <property type="evidence" value="ECO:0007669"/>
    <property type="project" value="TreeGrafter"/>
</dbReference>
<dbReference type="GO" id="GO:0006355">
    <property type="term" value="P:regulation of DNA-templated transcription"/>
    <property type="evidence" value="ECO:0007669"/>
    <property type="project" value="InterPro"/>
</dbReference>
<dbReference type="CDD" id="cd17574">
    <property type="entry name" value="REC_OmpR"/>
    <property type="match status" value="1"/>
</dbReference>
<dbReference type="CDD" id="cd00383">
    <property type="entry name" value="trans_reg_C"/>
    <property type="match status" value="1"/>
</dbReference>
<dbReference type="FunFam" id="3.40.50.2300:FF:000001">
    <property type="entry name" value="DNA-binding response regulator PhoB"/>
    <property type="match status" value="1"/>
</dbReference>
<dbReference type="FunFam" id="1.10.10.10:FF:000018">
    <property type="entry name" value="DNA-binding response regulator ResD"/>
    <property type="match status" value="1"/>
</dbReference>
<dbReference type="Gene3D" id="3.40.50.2300">
    <property type="match status" value="1"/>
</dbReference>
<dbReference type="Gene3D" id="6.10.250.690">
    <property type="match status" value="1"/>
</dbReference>
<dbReference type="Gene3D" id="1.10.10.10">
    <property type="entry name" value="Winged helix-like DNA-binding domain superfamily/Winged helix DNA-binding domain"/>
    <property type="match status" value="1"/>
</dbReference>
<dbReference type="InterPro" id="IPR011006">
    <property type="entry name" value="CheY-like_superfamily"/>
</dbReference>
<dbReference type="InterPro" id="IPR001867">
    <property type="entry name" value="OmpR/PhoB-type_DNA-bd"/>
</dbReference>
<dbReference type="InterPro" id="IPR001789">
    <property type="entry name" value="Sig_transdc_resp-reg_receiver"/>
</dbReference>
<dbReference type="InterPro" id="IPR039420">
    <property type="entry name" value="WalR-like"/>
</dbReference>
<dbReference type="InterPro" id="IPR036388">
    <property type="entry name" value="WH-like_DNA-bd_sf"/>
</dbReference>
<dbReference type="PANTHER" id="PTHR48111">
    <property type="entry name" value="REGULATOR OF RPOS"/>
    <property type="match status" value="1"/>
</dbReference>
<dbReference type="PANTHER" id="PTHR48111:SF44">
    <property type="entry name" value="TRANSCRIPTIONAL REGULATORY PROTEIN RESD"/>
    <property type="match status" value="1"/>
</dbReference>
<dbReference type="Pfam" id="PF00072">
    <property type="entry name" value="Response_reg"/>
    <property type="match status" value="1"/>
</dbReference>
<dbReference type="Pfam" id="PF00486">
    <property type="entry name" value="Trans_reg_C"/>
    <property type="match status" value="1"/>
</dbReference>
<dbReference type="SMART" id="SM00448">
    <property type="entry name" value="REC"/>
    <property type="match status" value="1"/>
</dbReference>
<dbReference type="SMART" id="SM00862">
    <property type="entry name" value="Trans_reg_C"/>
    <property type="match status" value="1"/>
</dbReference>
<dbReference type="SUPFAM" id="SSF52172">
    <property type="entry name" value="CheY-like"/>
    <property type="match status" value="1"/>
</dbReference>
<dbReference type="PROSITE" id="PS51755">
    <property type="entry name" value="OMPR_PHOB"/>
    <property type="match status" value="1"/>
</dbReference>
<dbReference type="PROSITE" id="PS50110">
    <property type="entry name" value="RESPONSE_REGULATORY"/>
    <property type="match status" value="1"/>
</dbReference>
<proteinExistence type="evidence at protein level"/>
<name>SRRA_STAAN</name>
<accession>Q7A5H6</accession>
<evidence type="ECO:0000250" key="1"/>
<evidence type="ECO:0000250" key="2">
    <source>
        <dbReference type="UniProtKB" id="Q5HFT0"/>
    </source>
</evidence>
<evidence type="ECO:0000250" key="3">
    <source>
        <dbReference type="UniProtKB" id="Q9L524"/>
    </source>
</evidence>
<evidence type="ECO:0000255" key="4">
    <source>
        <dbReference type="PROSITE-ProRule" id="PRU00169"/>
    </source>
</evidence>
<evidence type="ECO:0000255" key="5">
    <source>
        <dbReference type="PROSITE-ProRule" id="PRU01091"/>
    </source>
</evidence>